<sequence>MIKDERWEGVYSFEDSPYLMETLTNLRNVSTENISFRKGLVRLGRYMGYELTKTMEFEEMHVQTPLEKTKGIFPKDRSNVVIITILRAAFPLMEGLIKNFESAKVGIVSASRGHAPDFKIEMNYIKVPQVTPEDTVIVSDPMIATGSTLIHVLKEFKDSKPKRMMIVGVLAAPEGINAVKAEFPDVEIFVTKIDDKLNNDGYIVPGLGDAGDRAFGEPFKVSMLPQMHNLE</sequence>
<accession>Q6LZE9</accession>
<evidence type="ECO:0000255" key="1">
    <source>
        <dbReference type="HAMAP-Rule" id="MF_01218"/>
    </source>
</evidence>
<evidence type="ECO:0000269" key="2">
    <source>
    </source>
</evidence>
<name>UPP_METMP</name>
<proteinExistence type="inferred from homology"/>
<feature type="chain" id="PRO_0000120920" description="Uracil phosphoribosyltransferase">
    <location>
        <begin position="1"/>
        <end position="231"/>
    </location>
</feature>
<feature type="binding site" evidence="1">
    <location>
        <begin position="38"/>
        <end position="42"/>
    </location>
    <ligand>
        <name>GTP</name>
        <dbReference type="ChEBI" id="CHEBI:37565"/>
    </ligand>
</feature>
<feature type="binding site" evidence="1">
    <location>
        <position position="87"/>
    </location>
    <ligand>
        <name>5-phospho-alpha-D-ribose 1-diphosphate</name>
        <dbReference type="ChEBI" id="CHEBI:58017"/>
    </ligand>
</feature>
<feature type="binding site" evidence="1">
    <location>
        <position position="112"/>
    </location>
    <ligand>
        <name>5-phospho-alpha-D-ribose 1-diphosphate</name>
        <dbReference type="ChEBI" id="CHEBI:58017"/>
    </ligand>
</feature>
<feature type="binding site" evidence="1">
    <location>
        <begin position="140"/>
        <end position="148"/>
    </location>
    <ligand>
        <name>5-phospho-alpha-D-ribose 1-diphosphate</name>
        <dbReference type="ChEBI" id="CHEBI:58017"/>
    </ligand>
</feature>
<feature type="binding site" evidence="1">
    <location>
        <position position="203"/>
    </location>
    <ligand>
        <name>uracil</name>
        <dbReference type="ChEBI" id="CHEBI:17568"/>
    </ligand>
</feature>
<feature type="binding site" evidence="1">
    <location>
        <begin position="208"/>
        <end position="210"/>
    </location>
    <ligand>
        <name>uracil</name>
        <dbReference type="ChEBI" id="CHEBI:17568"/>
    </ligand>
</feature>
<feature type="binding site" evidence="1">
    <location>
        <position position="209"/>
    </location>
    <ligand>
        <name>5-phospho-alpha-D-ribose 1-diphosphate</name>
        <dbReference type="ChEBI" id="CHEBI:58017"/>
    </ligand>
</feature>
<gene>
    <name evidence="1" type="primary">upp</name>
    <name type="ordered locus">MMP0680</name>
</gene>
<organism>
    <name type="scientific">Methanococcus maripaludis (strain DSM 14266 / JCM 13030 / NBRC 101832 / S2 / LL)</name>
    <dbReference type="NCBI Taxonomy" id="267377"/>
    <lineage>
        <taxon>Archaea</taxon>
        <taxon>Methanobacteriati</taxon>
        <taxon>Methanobacteriota</taxon>
        <taxon>Methanomada group</taxon>
        <taxon>Methanococci</taxon>
        <taxon>Methanococcales</taxon>
        <taxon>Methanococcaceae</taxon>
        <taxon>Methanococcus</taxon>
    </lineage>
</organism>
<protein>
    <recommendedName>
        <fullName evidence="1">Uracil phosphoribosyltransferase</fullName>
        <ecNumber evidence="1">2.4.2.9</ecNumber>
    </recommendedName>
    <alternativeName>
        <fullName evidence="1">UMP pyrophosphorylase</fullName>
    </alternativeName>
    <alternativeName>
        <fullName evidence="1">UPRTase</fullName>
    </alternativeName>
</protein>
<reference key="1">
    <citation type="journal article" date="2004" name="J. Bacteriol.">
        <title>Complete genome sequence of the genetically tractable hydrogenotrophic methanogen Methanococcus maripaludis.</title>
        <authorList>
            <person name="Hendrickson E.L."/>
            <person name="Kaul R."/>
            <person name="Zhou Y."/>
            <person name="Bovee D."/>
            <person name="Chapman P."/>
            <person name="Chung J."/>
            <person name="Conway de Macario E."/>
            <person name="Dodsworth J.A."/>
            <person name="Gillett W."/>
            <person name="Graham D.E."/>
            <person name="Hackett M."/>
            <person name="Haydock A.K."/>
            <person name="Kang A."/>
            <person name="Land M.L."/>
            <person name="Levy R."/>
            <person name="Lie T.J."/>
            <person name="Major T.A."/>
            <person name="Moore B.C."/>
            <person name="Porat I."/>
            <person name="Palmeiri A."/>
            <person name="Rouse G."/>
            <person name="Saenphimmachak C."/>
            <person name="Soell D."/>
            <person name="Van Dien S."/>
            <person name="Wang T."/>
            <person name="Whitman W.B."/>
            <person name="Xia Q."/>
            <person name="Zhang Y."/>
            <person name="Larimer F.W."/>
            <person name="Olson M.V."/>
            <person name="Leigh J.A."/>
        </authorList>
    </citation>
    <scope>NUCLEOTIDE SEQUENCE [LARGE SCALE GENOMIC DNA]</scope>
    <source>
        <strain>DSM 14266 / JCM 13030 / NBRC 101832 / S2 / LL</strain>
    </source>
</reference>
<reference key="2">
    <citation type="journal article" date="2005" name="J. Bacteriol.">
        <title>Markerless mutagenesis in Methanococcus maripaludis demonstrates roles for alanine dehydrogenase, alanine racemase, and alanine permease.</title>
        <authorList>
            <person name="Moore B.C."/>
            <person name="Leigh J.A."/>
        </authorList>
    </citation>
    <scope>DISRUPTION PHENOTYPE</scope>
    <source>
        <strain>DSM 14266 / JCM 13030 / NBRC 101832 / S2 / LL</strain>
    </source>
</reference>
<dbReference type="EC" id="2.4.2.9" evidence="1"/>
<dbReference type="EMBL" id="BX950229">
    <property type="protein sequence ID" value="CAF30236.1"/>
    <property type="molecule type" value="Genomic_DNA"/>
</dbReference>
<dbReference type="RefSeq" id="WP_011170624.1">
    <property type="nucleotide sequence ID" value="NC_005791.1"/>
</dbReference>
<dbReference type="SMR" id="Q6LZE9"/>
<dbReference type="IntAct" id="Q6LZE9">
    <property type="interactions" value="1"/>
</dbReference>
<dbReference type="MINT" id="Q6LZE9"/>
<dbReference type="STRING" id="267377.MMP0680"/>
<dbReference type="EnsemblBacteria" id="CAF30236">
    <property type="protein sequence ID" value="CAF30236"/>
    <property type="gene ID" value="MMP0680"/>
</dbReference>
<dbReference type="GeneID" id="41279149"/>
<dbReference type="KEGG" id="mmp:MMP0680"/>
<dbReference type="PATRIC" id="fig|267377.15.peg.697"/>
<dbReference type="eggNOG" id="arCOG04128">
    <property type="taxonomic scope" value="Archaea"/>
</dbReference>
<dbReference type="HOGENOM" id="CLU_067096_2_0_2"/>
<dbReference type="OrthoDB" id="80352at2157"/>
<dbReference type="UniPathway" id="UPA00574">
    <property type="reaction ID" value="UER00636"/>
</dbReference>
<dbReference type="Proteomes" id="UP000000590">
    <property type="component" value="Chromosome"/>
</dbReference>
<dbReference type="GO" id="GO:0005525">
    <property type="term" value="F:GTP binding"/>
    <property type="evidence" value="ECO:0007669"/>
    <property type="project" value="UniProtKB-KW"/>
</dbReference>
<dbReference type="GO" id="GO:0000287">
    <property type="term" value="F:magnesium ion binding"/>
    <property type="evidence" value="ECO:0007669"/>
    <property type="project" value="UniProtKB-UniRule"/>
</dbReference>
<dbReference type="GO" id="GO:0004845">
    <property type="term" value="F:uracil phosphoribosyltransferase activity"/>
    <property type="evidence" value="ECO:0007669"/>
    <property type="project" value="UniProtKB-UniRule"/>
</dbReference>
<dbReference type="GO" id="GO:0044206">
    <property type="term" value="P:UMP salvage"/>
    <property type="evidence" value="ECO:0007669"/>
    <property type="project" value="UniProtKB-UniRule"/>
</dbReference>
<dbReference type="GO" id="GO:0006223">
    <property type="term" value="P:uracil salvage"/>
    <property type="evidence" value="ECO:0007669"/>
    <property type="project" value="InterPro"/>
</dbReference>
<dbReference type="CDD" id="cd06223">
    <property type="entry name" value="PRTases_typeI"/>
    <property type="match status" value="1"/>
</dbReference>
<dbReference type="Gene3D" id="3.40.50.2020">
    <property type="match status" value="1"/>
</dbReference>
<dbReference type="HAMAP" id="MF_01218_A">
    <property type="entry name" value="Upp_A"/>
    <property type="match status" value="1"/>
</dbReference>
<dbReference type="InterPro" id="IPR000836">
    <property type="entry name" value="PRibTrfase_dom"/>
</dbReference>
<dbReference type="InterPro" id="IPR029057">
    <property type="entry name" value="PRTase-like"/>
</dbReference>
<dbReference type="InterPro" id="IPR034331">
    <property type="entry name" value="Upp_A"/>
</dbReference>
<dbReference type="InterPro" id="IPR005765">
    <property type="entry name" value="Ura_phspho_trans"/>
</dbReference>
<dbReference type="NCBIfam" id="NF001097">
    <property type="entry name" value="PRK00129.1"/>
    <property type="match status" value="1"/>
</dbReference>
<dbReference type="NCBIfam" id="TIGR01091">
    <property type="entry name" value="upp"/>
    <property type="match status" value="1"/>
</dbReference>
<dbReference type="Pfam" id="PF14681">
    <property type="entry name" value="UPRTase"/>
    <property type="match status" value="1"/>
</dbReference>
<dbReference type="SUPFAM" id="SSF53271">
    <property type="entry name" value="PRTase-like"/>
    <property type="match status" value="1"/>
</dbReference>
<keyword id="KW-0021">Allosteric enzyme</keyword>
<keyword id="KW-0328">Glycosyltransferase</keyword>
<keyword id="KW-0342">GTP-binding</keyword>
<keyword id="KW-0460">Magnesium</keyword>
<keyword id="KW-0547">Nucleotide-binding</keyword>
<keyword id="KW-1185">Reference proteome</keyword>
<keyword id="KW-0808">Transferase</keyword>
<comment type="function">
    <text evidence="1">Catalyzes the conversion of uracil and 5-phospho-alpha-D-ribose 1-diphosphate (PRPP) to UMP and diphosphate.</text>
</comment>
<comment type="catalytic activity">
    <reaction evidence="1">
        <text>UMP + diphosphate = 5-phospho-alpha-D-ribose 1-diphosphate + uracil</text>
        <dbReference type="Rhea" id="RHEA:13017"/>
        <dbReference type="ChEBI" id="CHEBI:17568"/>
        <dbReference type="ChEBI" id="CHEBI:33019"/>
        <dbReference type="ChEBI" id="CHEBI:57865"/>
        <dbReference type="ChEBI" id="CHEBI:58017"/>
        <dbReference type="EC" id="2.4.2.9"/>
    </reaction>
</comment>
<comment type="cofactor">
    <cofactor evidence="1">
        <name>Mg(2+)</name>
        <dbReference type="ChEBI" id="CHEBI:18420"/>
    </cofactor>
    <text evidence="1">Binds 1 Mg(2+) ion per subunit. The magnesium is bound as Mg-PRPP.</text>
</comment>
<comment type="activity regulation">
    <text evidence="1">Allosterically activated by GTP.</text>
</comment>
<comment type="pathway">
    <text evidence="1">Pyrimidine metabolism; UMP biosynthesis via salvage pathway; UMP from uracil: step 1/1.</text>
</comment>
<comment type="disruption phenotype">
    <text evidence="2">Loss of sensitivity to 6-azauracil.</text>
</comment>
<comment type="similarity">
    <text evidence="1">Belongs to the UPRTase family.</text>
</comment>